<proteinExistence type="inferred from homology"/>
<dbReference type="EC" id="2.7.1.170" evidence="1"/>
<dbReference type="EMBL" id="AP008231">
    <property type="protein sequence ID" value="BAD78646.1"/>
    <property type="molecule type" value="Genomic_DNA"/>
</dbReference>
<dbReference type="RefSeq" id="WP_011242768.1">
    <property type="nucleotide sequence ID" value="NC_006576.1"/>
</dbReference>
<dbReference type="SMR" id="Q5N4X3"/>
<dbReference type="KEGG" id="syc:syc0456_d"/>
<dbReference type="eggNOG" id="COG2377">
    <property type="taxonomic scope" value="Bacteria"/>
</dbReference>
<dbReference type="UniPathway" id="UPA00343"/>
<dbReference type="UniPathway" id="UPA00544"/>
<dbReference type="Proteomes" id="UP000001175">
    <property type="component" value="Chromosome"/>
</dbReference>
<dbReference type="GO" id="GO:0005524">
    <property type="term" value="F:ATP binding"/>
    <property type="evidence" value="ECO:0007669"/>
    <property type="project" value="UniProtKB-UniRule"/>
</dbReference>
<dbReference type="GO" id="GO:0016301">
    <property type="term" value="F:kinase activity"/>
    <property type="evidence" value="ECO:0007669"/>
    <property type="project" value="UniProtKB-KW"/>
</dbReference>
<dbReference type="GO" id="GO:0016773">
    <property type="term" value="F:phosphotransferase activity, alcohol group as acceptor"/>
    <property type="evidence" value="ECO:0007669"/>
    <property type="project" value="UniProtKB-UniRule"/>
</dbReference>
<dbReference type="GO" id="GO:0097175">
    <property type="term" value="P:1,6-anhydro-N-acetyl-beta-muramic acid catabolic process"/>
    <property type="evidence" value="ECO:0007669"/>
    <property type="project" value="UniProtKB-UniRule"/>
</dbReference>
<dbReference type="GO" id="GO:0006040">
    <property type="term" value="P:amino sugar metabolic process"/>
    <property type="evidence" value="ECO:0007669"/>
    <property type="project" value="InterPro"/>
</dbReference>
<dbReference type="GO" id="GO:0009254">
    <property type="term" value="P:peptidoglycan turnover"/>
    <property type="evidence" value="ECO:0007669"/>
    <property type="project" value="UniProtKB-UniRule"/>
</dbReference>
<dbReference type="CDD" id="cd24050">
    <property type="entry name" value="ASKHA_NBD_ANMK"/>
    <property type="match status" value="1"/>
</dbReference>
<dbReference type="Gene3D" id="3.30.420.40">
    <property type="match status" value="2"/>
</dbReference>
<dbReference type="HAMAP" id="MF_01270">
    <property type="entry name" value="AnhMurNAc_kinase"/>
    <property type="match status" value="1"/>
</dbReference>
<dbReference type="InterPro" id="IPR005338">
    <property type="entry name" value="Anhydro_N_Ac-Mur_kinase"/>
</dbReference>
<dbReference type="InterPro" id="IPR043129">
    <property type="entry name" value="ATPase_NBD"/>
</dbReference>
<dbReference type="NCBIfam" id="NF007143">
    <property type="entry name" value="PRK09585.2-2"/>
    <property type="match status" value="1"/>
</dbReference>
<dbReference type="NCBIfam" id="NF007148">
    <property type="entry name" value="PRK09585.3-2"/>
    <property type="match status" value="1"/>
</dbReference>
<dbReference type="PANTHER" id="PTHR30605">
    <property type="entry name" value="ANHYDRO-N-ACETYLMURAMIC ACID KINASE"/>
    <property type="match status" value="1"/>
</dbReference>
<dbReference type="PANTHER" id="PTHR30605:SF0">
    <property type="entry name" value="ANHYDRO-N-ACETYLMURAMIC ACID KINASE"/>
    <property type="match status" value="1"/>
</dbReference>
<dbReference type="Pfam" id="PF03702">
    <property type="entry name" value="AnmK"/>
    <property type="match status" value="1"/>
</dbReference>
<dbReference type="SUPFAM" id="SSF53067">
    <property type="entry name" value="Actin-like ATPase domain"/>
    <property type="match status" value="1"/>
</dbReference>
<reference key="1">
    <citation type="journal article" date="2007" name="Photosyn. Res.">
        <title>Complete nucleotide sequence of the freshwater unicellular cyanobacterium Synechococcus elongatus PCC 6301 chromosome: gene content and organization.</title>
        <authorList>
            <person name="Sugita C."/>
            <person name="Ogata K."/>
            <person name="Shikata M."/>
            <person name="Jikuya H."/>
            <person name="Takano J."/>
            <person name="Furumichi M."/>
            <person name="Kanehisa M."/>
            <person name="Omata T."/>
            <person name="Sugiura M."/>
            <person name="Sugita M."/>
        </authorList>
    </citation>
    <scope>NUCLEOTIDE SEQUENCE [LARGE SCALE GENOMIC DNA]</scope>
    <source>
        <strain>ATCC 27144 / PCC 6301 / SAUG 1402/1</strain>
    </source>
</reference>
<organism>
    <name type="scientific">Synechococcus sp. (strain ATCC 27144 / PCC 6301 / SAUG 1402/1)</name>
    <name type="common">Anacystis nidulans</name>
    <dbReference type="NCBI Taxonomy" id="269084"/>
    <lineage>
        <taxon>Bacteria</taxon>
        <taxon>Bacillati</taxon>
        <taxon>Cyanobacteriota</taxon>
        <taxon>Cyanophyceae</taxon>
        <taxon>Synechococcales</taxon>
        <taxon>Synechococcaceae</taxon>
        <taxon>Synechococcus</taxon>
    </lineage>
</organism>
<protein>
    <recommendedName>
        <fullName evidence="1">Anhydro-N-acetylmuramic acid kinase</fullName>
        <ecNumber evidence="1">2.7.1.170</ecNumber>
    </recommendedName>
    <alternativeName>
        <fullName evidence="1">AnhMurNAc kinase</fullName>
    </alternativeName>
</protein>
<comment type="function">
    <text evidence="1">Catalyzes the specific phosphorylation of 1,6-anhydro-N-acetylmuramic acid (anhMurNAc) with the simultaneous cleavage of the 1,6-anhydro ring, generating MurNAc-6-P. Is required for the utilization of anhMurNAc either imported from the medium or derived from its own cell wall murein, and thus plays a role in cell wall recycling.</text>
</comment>
<comment type="catalytic activity">
    <reaction evidence="1">
        <text>1,6-anhydro-N-acetyl-beta-muramate + ATP + H2O = N-acetyl-D-muramate 6-phosphate + ADP + H(+)</text>
        <dbReference type="Rhea" id="RHEA:24952"/>
        <dbReference type="ChEBI" id="CHEBI:15377"/>
        <dbReference type="ChEBI" id="CHEBI:15378"/>
        <dbReference type="ChEBI" id="CHEBI:30616"/>
        <dbReference type="ChEBI" id="CHEBI:58690"/>
        <dbReference type="ChEBI" id="CHEBI:58722"/>
        <dbReference type="ChEBI" id="CHEBI:456216"/>
        <dbReference type="EC" id="2.7.1.170"/>
    </reaction>
</comment>
<comment type="pathway">
    <text evidence="1">Amino-sugar metabolism; 1,6-anhydro-N-acetylmuramate degradation.</text>
</comment>
<comment type="pathway">
    <text evidence="1">Cell wall biogenesis; peptidoglycan recycling.</text>
</comment>
<comment type="similarity">
    <text evidence="1">Belongs to the anhydro-N-acetylmuramic acid kinase family.</text>
</comment>
<keyword id="KW-0067">ATP-binding</keyword>
<keyword id="KW-0119">Carbohydrate metabolism</keyword>
<keyword id="KW-0418">Kinase</keyword>
<keyword id="KW-0547">Nucleotide-binding</keyword>
<keyword id="KW-0808">Transferase</keyword>
<evidence type="ECO:0000255" key="1">
    <source>
        <dbReference type="HAMAP-Rule" id="MF_01270"/>
    </source>
</evidence>
<gene>
    <name evidence="1" type="primary">anmK</name>
    <name type="ordered locus">syc0456_d</name>
</gene>
<accession>Q5N4X3</accession>
<sequence length="378" mass="40640">MRVLGLISGTSADGIDVAIAEIQGFQADLSVALLAFETIAYEPSLRDRILEVAAGFPLSVAELTALDAAIAQAFATAAQTLIQQHGAVDLIGSHGQTVYHQPLQAGQLGWSVQLGWGAAIAQQTGITTVSNFRSADLALGGQGAPPVPAVDLWLLGSDSENRCVQNIGGIGNLTWLPRRDHPDWQSEVRGWDTGPGNSLLDLAVQKLSQGRLSYDDGSQWAATGQIDQVLCDRWLQEDDYFRLPPPKSTGRERYGWQFLETWAAELDRLTAADQLATLTEFTAASIVNNYRHFLPALPDRVLVCGGGLHNQFLLQRLQQQLPTVKIASTDDFGVNSQAKEAIAIAVLAYWRQHNVPGNLPAVTGASGPALLGDVFART</sequence>
<feature type="chain" id="PRO_0000250068" description="Anhydro-N-acetylmuramic acid kinase">
    <location>
        <begin position="1"/>
        <end position="378"/>
    </location>
</feature>
<feature type="binding site" evidence="1">
    <location>
        <begin position="9"/>
        <end position="16"/>
    </location>
    <ligand>
        <name>ATP</name>
        <dbReference type="ChEBI" id="CHEBI:30616"/>
    </ligand>
</feature>
<name>ANMK_SYNP6</name>